<reference key="1">
    <citation type="journal article" date="2005" name="Nucleic Acids Res.">
        <title>Genome dynamics and diversity of Shigella species, the etiologic agents of bacillary dysentery.</title>
        <authorList>
            <person name="Yang F."/>
            <person name="Yang J."/>
            <person name="Zhang X."/>
            <person name="Chen L."/>
            <person name="Jiang Y."/>
            <person name="Yan Y."/>
            <person name="Tang X."/>
            <person name="Wang J."/>
            <person name="Xiong Z."/>
            <person name="Dong J."/>
            <person name="Xue Y."/>
            <person name="Zhu Y."/>
            <person name="Xu X."/>
            <person name="Sun L."/>
            <person name="Chen S."/>
            <person name="Nie H."/>
            <person name="Peng J."/>
            <person name="Xu J."/>
            <person name="Wang Y."/>
            <person name="Yuan Z."/>
            <person name="Wen Y."/>
            <person name="Yao Z."/>
            <person name="Shen Y."/>
            <person name="Qiang B."/>
            <person name="Hou Y."/>
            <person name="Yu J."/>
            <person name="Jin Q."/>
        </authorList>
    </citation>
    <scope>NUCLEOTIDE SEQUENCE [LARGE SCALE GENOMIC DNA]</scope>
    <source>
        <strain>Sd197</strain>
    </source>
</reference>
<sequence length="504" mass="55139">MSFSVDVLANIAIELQRGIGHQDRFQRLITTLRQVLECDASALLRYDLRQFIPLAIDGLAKDVLGRRFALEGHPRLEAIARAGDVVRFPADSGLPDPYDGLIPGQESLKVHACVGLPLFAGQNLIGALTLDGMQPDQFDVFSDEELRLIAALAAGALSNALLIEQLESQNMLPGDAAPFEAVKQTQMIGLSPGMTQLKKEIEIVAASDLNVLISGETGTGKELVAKAIHEASPRAVNPLVYLNCAALPESVAESELFGHVKGAFTGAISNRSGKFEMADNGTLFLDEIGELSLALQAKLLRVLQYGDIQRVGDDRSLRVDVRVLAATNRDLREEVLAGRFRADLFHRLSVFPLSVPPLRERGDDVILLAGYFCEQCRLRQGLSRVVLSAGARNLLQHYSFPGNVRELEHAIHRAVVLARATRNGDEVILEAQHFAFPEVTLPPPEAAAVPVVKQNLREATEAFQRETIRQALAQNHHNWAACARMLETDVANLHRLAKRLGLKD</sequence>
<keyword id="KW-0067">ATP-binding</keyword>
<keyword id="KW-0238">DNA-binding</keyword>
<keyword id="KW-0547">Nucleotide-binding</keyword>
<keyword id="KW-0597">Phosphoprotein</keyword>
<keyword id="KW-1185">Reference proteome</keyword>
<keyword id="KW-0804">Transcription</keyword>
<keyword id="KW-0805">Transcription regulation</keyword>
<name>NORR_SHIDS</name>
<feature type="chain" id="PRO_0000305625" description="Anaerobic nitric oxide reductase transcription regulator NorR">
    <location>
        <begin position="1"/>
        <end position="504"/>
    </location>
</feature>
<feature type="domain" description="Sigma-54 factor interaction" evidence="1">
    <location>
        <begin position="187"/>
        <end position="416"/>
    </location>
</feature>
<feature type="DNA-binding region" description="H-T-H motif" evidence="1">
    <location>
        <begin position="479"/>
        <end position="498"/>
    </location>
</feature>
<feature type="binding site" evidence="1">
    <location>
        <begin position="215"/>
        <end position="222"/>
    </location>
    <ligand>
        <name>ATP</name>
        <dbReference type="ChEBI" id="CHEBI:30616"/>
    </ligand>
</feature>
<feature type="binding site" evidence="1">
    <location>
        <begin position="278"/>
        <end position="287"/>
    </location>
    <ligand>
        <name>ATP</name>
        <dbReference type="ChEBI" id="CHEBI:30616"/>
    </ligand>
</feature>
<feature type="modified residue" description="4-aspartylphosphate" evidence="1">
    <location>
        <position position="57"/>
    </location>
</feature>
<protein>
    <recommendedName>
        <fullName evidence="1">Anaerobic nitric oxide reductase transcription regulator NorR</fullName>
    </recommendedName>
</protein>
<accession>Q32CL9</accession>
<comment type="function">
    <text evidence="1">Required for the expression of anaerobic nitric oxide (NO) reductase, acts as a transcriptional activator for at least the norVW operon. Activation also requires sigma-54.</text>
</comment>
<comment type="pathway">
    <text evidence="1">Nitrogen metabolism; nitric oxide reduction.</text>
</comment>
<comment type="sequence caution" evidence="2">
    <conflict type="erroneous initiation">
        <sequence resource="EMBL-CDS" id="ABB62936"/>
    </conflict>
</comment>
<evidence type="ECO:0000255" key="1">
    <source>
        <dbReference type="HAMAP-Rule" id="MF_01314"/>
    </source>
</evidence>
<evidence type="ECO:0000305" key="2"/>
<organism>
    <name type="scientific">Shigella dysenteriae serotype 1 (strain Sd197)</name>
    <dbReference type="NCBI Taxonomy" id="300267"/>
    <lineage>
        <taxon>Bacteria</taxon>
        <taxon>Pseudomonadati</taxon>
        <taxon>Pseudomonadota</taxon>
        <taxon>Gammaproteobacteria</taxon>
        <taxon>Enterobacterales</taxon>
        <taxon>Enterobacteriaceae</taxon>
        <taxon>Shigella</taxon>
    </lineage>
</organism>
<dbReference type="EMBL" id="CP000034">
    <property type="protein sequence ID" value="ABB62936.1"/>
    <property type="status" value="ALT_INIT"/>
    <property type="molecule type" value="Genomic_DNA"/>
</dbReference>
<dbReference type="RefSeq" id="WP_000010706.1">
    <property type="nucleotide sequence ID" value="NC_007606.1"/>
</dbReference>
<dbReference type="RefSeq" id="YP_404427.2">
    <property type="nucleotide sequence ID" value="NC_007606.1"/>
</dbReference>
<dbReference type="SMR" id="Q32CL9"/>
<dbReference type="STRING" id="300267.SDY_2906"/>
<dbReference type="EnsemblBacteria" id="ABB62936">
    <property type="protein sequence ID" value="ABB62936"/>
    <property type="gene ID" value="SDY_2906"/>
</dbReference>
<dbReference type="KEGG" id="sdy:SDY_2906"/>
<dbReference type="PATRIC" id="fig|300267.13.peg.3491"/>
<dbReference type="HOGENOM" id="CLU_000445_125_0_6"/>
<dbReference type="UniPathway" id="UPA00638"/>
<dbReference type="Proteomes" id="UP000002716">
    <property type="component" value="Chromosome"/>
</dbReference>
<dbReference type="GO" id="GO:0005524">
    <property type="term" value="F:ATP binding"/>
    <property type="evidence" value="ECO:0007669"/>
    <property type="project" value="UniProtKB-UniRule"/>
</dbReference>
<dbReference type="GO" id="GO:0016887">
    <property type="term" value="F:ATP hydrolysis activity"/>
    <property type="evidence" value="ECO:0007669"/>
    <property type="project" value="InterPro"/>
</dbReference>
<dbReference type="GO" id="GO:0003677">
    <property type="term" value="F:DNA binding"/>
    <property type="evidence" value="ECO:0007669"/>
    <property type="project" value="UniProtKB-KW"/>
</dbReference>
<dbReference type="GO" id="GO:0003700">
    <property type="term" value="F:DNA-binding transcription factor activity"/>
    <property type="evidence" value="ECO:0007669"/>
    <property type="project" value="UniProtKB-UniRule"/>
</dbReference>
<dbReference type="GO" id="GO:0000160">
    <property type="term" value="P:phosphorelay signal transduction system"/>
    <property type="evidence" value="ECO:0007669"/>
    <property type="project" value="UniProtKB-UniRule"/>
</dbReference>
<dbReference type="CDD" id="cd00009">
    <property type="entry name" value="AAA"/>
    <property type="match status" value="1"/>
</dbReference>
<dbReference type="FunFam" id="1.10.10.60:FF:000188">
    <property type="entry name" value="Anaerobic nitric oxide reductase transcription regulator NorR"/>
    <property type="match status" value="1"/>
</dbReference>
<dbReference type="FunFam" id="1.10.8.60:FF:000045">
    <property type="entry name" value="Anaerobic nitric oxide reductase transcription regulator NorR"/>
    <property type="match status" value="1"/>
</dbReference>
<dbReference type="FunFam" id="3.30.450.40:FF:000021">
    <property type="entry name" value="Anaerobic nitric oxide reductase transcription regulator NorR"/>
    <property type="match status" value="1"/>
</dbReference>
<dbReference type="FunFam" id="3.40.50.300:FF:000006">
    <property type="entry name" value="DNA-binding transcriptional regulator NtrC"/>
    <property type="match status" value="1"/>
</dbReference>
<dbReference type="Gene3D" id="1.10.8.60">
    <property type="match status" value="1"/>
</dbReference>
<dbReference type="Gene3D" id="3.30.450.40">
    <property type="match status" value="1"/>
</dbReference>
<dbReference type="Gene3D" id="1.10.10.60">
    <property type="entry name" value="Homeodomain-like"/>
    <property type="match status" value="1"/>
</dbReference>
<dbReference type="Gene3D" id="3.40.50.300">
    <property type="entry name" value="P-loop containing nucleotide triphosphate hydrolases"/>
    <property type="match status" value="1"/>
</dbReference>
<dbReference type="HAMAP" id="MF_01314">
    <property type="entry name" value="NorR"/>
    <property type="match status" value="1"/>
</dbReference>
<dbReference type="InterPro" id="IPR003593">
    <property type="entry name" value="AAA+_ATPase"/>
</dbReference>
<dbReference type="InterPro" id="IPR003018">
    <property type="entry name" value="GAF"/>
</dbReference>
<dbReference type="InterPro" id="IPR029016">
    <property type="entry name" value="GAF-like_dom_sf"/>
</dbReference>
<dbReference type="InterPro" id="IPR009057">
    <property type="entry name" value="Homeodomain-like_sf"/>
</dbReference>
<dbReference type="InterPro" id="IPR023944">
    <property type="entry name" value="NorR"/>
</dbReference>
<dbReference type="InterPro" id="IPR027417">
    <property type="entry name" value="P-loop_NTPase"/>
</dbReference>
<dbReference type="InterPro" id="IPR002078">
    <property type="entry name" value="Sigma_54_int"/>
</dbReference>
<dbReference type="InterPro" id="IPR025662">
    <property type="entry name" value="Sigma_54_int_dom_ATP-bd_1"/>
</dbReference>
<dbReference type="InterPro" id="IPR025943">
    <property type="entry name" value="Sigma_54_int_dom_ATP-bd_2"/>
</dbReference>
<dbReference type="InterPro" id="IPR025944">
    <property type="entry name" value="Sigma_54_int_dom_CS"/>
</dbReference>
<dbReference type="NCBIfam" id="NF003451">
    <property type="entry name" value="PRK05022.1"/>
    <property type="match status" value="1"/>
</dbReference>
<dbReference type="PANTHER" id="PTHR32071:SF35">
    <property type="entry name" value="ANAEROBIC NITRIC OXIDE REDUCTASE TRANSCRIPTION REGULATOR NORR"/>
    <property type="match status" value="1"/>
</dbReference>
<dbReference type="PANTHER" id="PTHR32071">
    <property type="entry name" value="TRANSCRIPTIONAL REGULATORY PROTEIN"/>
    <property type="match status" value="1"/>
</dbReference>
<dbReference type="Pfam" id="PF01590">
    <property type="entry name" value="GAF"/>
    <property type="match status" value="1"/>
</dbReference>
<dbReference type="Pfam" id="PF00158">
    <property type="entry name" value="Sigma54_activat"/>
    <property type="match status" value="1"/>
</dbReference>
<dbReference type="SMART" id="SM00382">
    <property type="entry name" value="AAA"/>
    <property type="match status" value="1"/>
</dbReference>
<dbReference type="SMART" id="SM00065">
    <property type="entry name" value="GAF"/>
    <property type="match status" value="1"/>
</dbReference>
<dbReference type="SUPFAM" id="SSF55781">
    <property type="entry name" value="GAF domain-like"/>
    <property type="match status" value="1"/>
</dbReference>
<dbReference type="SUPFAM" id="SSF46689">
    <property type="entry name" value="Homeodomain-like"/>
    <property type="match status" value="1"/>
</dbReference>
<dbReference type="SUPFAM" id="SSF52540">
    <property type="entry name" value="P-loop containing nucleoside triphosphate hydrolases"/>
    <property type="match status" value="1"/>
</dbReference>
<dbReference type="PROSITE" id="PS00675">
    <property type="entry name" value="SIGMA54_INTERACT_1"/>
    <property type="match status" value="1"/>
</dbReference>
<dbReference type="PROSITE" id="PS00676">
    <property type="entry name" value="SIGMA54_INTERACT_2"/>
    <property type="match status" value="1"/>
</dbReference>
<dbReference type="PROSITE" id="PS00688">
    <property type="entry name" value="SIGMA54_INTERACT_3"/>
    <property type="match status" value="1"/>
</dbReference>
<dbReference type="PROSITE" id="PS50045">
    <property type="entry name" value="SIGMA54_INTERACT_4"/>
    <property type="match status" value="1"/>
</dbReference>
<proteinExistence type="inferred from homology"/>
<gene>
    <name evidence="1" type="primary">norR</name>
    <name type="ordered locus">SDY_2906</name>
</gene>